<protein>
    <recommendedName>
        <fullName>Transforming growth factor beta-2 proprotein</fullName>
    </recommendedName>
    <component>
        <recommendedName>
            <fullName>Latency-associated peptide</fullName>
            <shortName>LAP</shortName>
        </recommendedName>
    </component>
    <component>
        <recommendedName>
            <fullName>Transforming growth factor beta-2</fullName>
            <shortName>TGF-beta-2</shortName>
        </recommendedName>
    </component>
</protein>
<proteinExistence type="evidence at protein level"/>
<accession>P27090</accession>
<accession>Q91VP5</accession>
<evidence type="ECO:0000250" key="1">
    <source>
        <dbReference type="UniProtKB" id="P01137"/>
    </source>
</evidence>
<evidence type="ECO:0000250" key="2">
    <source>
        <dbReference type="UniProtKB" id="P04202"/>
    </source>
</evidence>
<evidence type="ECO:0000250" key="3">
    <source>
        <dbReference type="UniProtKB" id="P61812"/>
    </source>
</evidence>
<evidence type="ECO:0000255" key="4"/>
<evidence type="ECO:0000269" key="5">
    <source>
    </source>
</evidence>
<evidence type="ECO:0000269" key="6">
    <source>
    </source>
</evidence>
<evidence type="ECO:0000269" key="7">
    <source>
    </source>
</evidence>
<evidence type="ECO:0000269" key="8">
    <source>
    </source>
</evidence>
<evidence type="ECO:0000305" key="9"/>
<evidence type="ECO:0007829" key="10">
    <source>
        <dbReference type="PDB" id="5TX2"/>
    </source>
</evidence>
<sequence length="414" mass="47589">MHYCVLSTFLLLHLVPVALSLSTCSTLDMDQFMRKRIEAIRGQILSKLKLTSPPEDYPEPDEVPPEVISIYNSTRDLLQEKASRRAAACERERSDEEYYAKEVYKIDMPSHLPSENAIPPTFYRPYFRIVRFDVSTMEKNASNLVKAEFRVFRLQNPKARVAEQRIELYQILKSKDLTSPTQRYIDSKVVKTRAEGEWLSFDVTDAVQEWLHHKDRNLGFKISLHCPCCTFVPSNNYIIPNKSEELEARFAGIDGTSTYASGDQKTIKSTRKKTSGKTPHLLLMLLPSYRLESQQSSRRKKRALDAAYCFRNVQDNCCLRPLYIDFKRDLGWKWIHEPKGYNANFCAGACPYLWSSDTQHTKVLSLYNTINPEASASPCCVSQDLEPLTILYYIGNTPKIEQLSNMIVKSCKCS</sequence>
<reference key="1">
    <citation type="journal article" date="1989" name="Mol. Endocrinol.">
        <title>Murine transforming growth factor-beta 2 cDNA sequence and expression in adult tissues and embryos.</title>
        <authorList>
            <person name="Miller D.A."/>
            <person name="Lee A."/>
            <person name="Pelton R.W."/>
            <person name="Chen E.Y."/>
            <person name="Moses H.L."/>
            <person name="Derynck R."/>
        </authorList>
    </citation>
    <scope>NUCLEOTIDE SEQUENCE [MRNA]</scope>
</reference>
<reference key="2">
    <citation type="journal article" date="2004" name="Genome Res.">
        <title>The status, quality, and expansion of the NIH full-length cDNA project: the Mammalian Gene Collection (MGC).</title>
        <authorList>
            <consortium name="The MGC Project Team"/>
        </authorList>
    </citation>
    <scope>NUCLEOTIDE SEQUENCE [LARGE SCALE MRNA]</scope>
    <source>
        <tissue>Mammary tumor</tissue>
    </source>
</reference>
<reference key="3">
    <citation type="journal article" date="2004" name="Biochem. Biophys. Res. Commun.">
        <title>P311 binds to the latency associated protein and downregulates the expression of TGF-beta1 and TGF-beta2.</title>
        <authorList>
            <person name="Paliwal S."/>
            <person name="Shi J."/>
            <person name="Dhru U."/>
            <person name="Zhou Y."/>
            <person name="Schuger L."/>
        </authorList>
    </citation>
    <scope>INTERACTION WITH NREP</scope>
</reference>
<reference key="4">
    <citation type="journal article" date="2004" name="Dev. Growth Differ.">
        <title>Developmentally regulated expression of mouse HtrA3 and its role as an inhibitor of TGF-beta signaling.</title>
        <authorList>
            <person name="Tocharus J."/>
            <person name="Tsuchiya A."/>
            <person name="Kajikawa M."/>
            <person name="Ueta Y."/>
            <person name="Oka C."/>
            <person name="Kawaichi M."/>
        </authorList>
    </citation>
    <scope>INTERACTION WITH HTRA3</scope>
</reference>
<reference key="5">
    <citation type="journal article" date="2004" name="Development">
        <title>HtrA1 serine protease inhibits signaling mediated by Tgfbeta family proteins.</title>
        <authorList>
            <person name="Oka C."/>
            <person name="Tsujimoto R."/>
            <person name="Kajikawa M."/>
            <person name="Koshiba-Takeuchi K."/>
            <person name="Ina J."/>
            <person name="Yano M."/>
            <person name="Tsuchiya A."/>
            <person name="Ueta Y."/>
            <person name="Soma A."/>
            <person name="Kanda H."/>
            <person name="Matsumoto M."/>
            <person name="Kawaichi M."/>
        </authorList>
    </citation>
    <scope>INTERACTION WITH HTRA1</scope>
</reference>
<reference key="6">
    <citation type="journal article" date="2013" name="J. Biol. Chem.">
        <title>Microfibril-associated glycoprotein 2 (MAGP2) loss of function has pleiotropic effects in vivo.</title>
        <authorList>
            <person name="Combs M.D."/>
            <person name="Knutsen R.H."/>
            <person name="Broekelmann T.J."/>
            <person name="Toennies H.M."/>
            <person name="Brett T.J."/>
            <person name="Miller C.A."/>
            <person name="Kober D.L."/>
            <person name="Craft C.S."/>
            <person name="Atkinson J.J."/>
            <person name="Shipley J.M."/>
            <person name="Trask B.C."/>
            <person name="Mecham R.P."/>
        </authorList>
    </citation>
    <scope>INTERACTION WITH MFAP5</scope>
</reference>
<organism>
    <name type="scientific">Mus musculus</name>
    <name type="common">Mouse</name>
    <dbReference type="NCBI Taxonomy" id="10090"/>
    <lineage>
        <taxon>Eukaryota</taxon>
        <taxon>Metazoa</taxon>
        <taxon>Chordata</taxon>
        <taxon>Craniata</taxon>
        <taxon>Vertebrata</taxon>
        <taxon>Euteleostomi</taxon>
        <taxon>Mammalia</taxon>
        <taxon>Eutheria</taxon>
        <taxon>Euarchontoglires</taxon>
        <taxon>Glires</taxon>
        <taxon>Rodentia</taxon>
        <taxon>Myomorpha</taxon>
        <taxon>Muroidea</taxon>
        <taxon>Muridae</taxon>
        <taxon>Murinae</taxon>
        <taxon>Mus</taxon>
        <taxon>Mus</taxon>
    </lineage>
</organism>
<feature type="signal peptide" evidence="4">
    <location>
        <begin position="1"/>
        <end position="20"/>
    </location>
</feature>
<feature type="chain" id="PRO_0000456181" description="Transforming growth factor beta-2 proprotein">
    <location>
        <begin position="21"/>
        <end position="414"/>
    </location>
</feature>
<feature type="chain" id="PRO_0000033786" description="Latency-associated peptide" evidence="3">
    <location>
        <begin position="21"/>
        <end position="302"/>
    </location>
</feature>
<feature type="chain" id="PRO_0000033787" description="Transforming growth factor beta-2" evidence="3">
    <location>
        <begin position="303"/>
        <end position="414"/>
    </location>
</feature>
<feature type="glycosylation site" description="N-linked (GlcNAc...) asparagine" evidence="4">
    <location>
        <position position="72"/>
    </location>
</feature>
<feature type="glycosylation site" description="N-linked (GlcNAc...) asparagine" evidence="4">
    <location>
        <position position="140"/>
    </location>
</feature>
<feature type="glycosylation site" description="N-linked (GlcNAc...) asparagine" evidence="4">
    <location>
        <position position="241"/>
    </location>
</feature>
<feature type="disulfide bond" evidence="3">
    <location>
        <begin position="309"/>
        <end position="318"/>
    </location>
</feature>
<feature type="disulfide bond" evidence="3">
    <location>
        <begin position="317"/>
        <end position="380"/>
    </location>
</feature>
<feature type="disulfide bond" evidence="3">
    <location>
        <begin position="346"/>
        <end position="411"/>
    </location>
</feature>
<feature type="disulfide bond" evidence="3">
    <location>
        <begin position="350"/>
        <end position="413"/>
    </location>
</feature>
<feature type="disulfide bond" description="Interchain" evidence="3">
    <location>
        <position position="379"/>
    </location>
</feature>
<feature type="sequence conflict" description="In Ref. 1; CAA40672." evidence="9" ref="1">
    <original>DE</original>
    <variation>EQ</variation>
    <location>
        <begin position="95"/>
        <end position="96"/>
    </location>
</feature>
<feature type="helix" evidence="10">
    <location>
        <begin position="306"/>
        <end position="311"/>
    </location>
</feature>
<feature type="strand" evidence="10">
    <location>
        <begin position="315"/>
        <end position="320"/>
    </location>
</feature>
<feature type="strand" evidence="10">
    <location>
        <begin position="323"/>
        <end position="325"/>
    </location>
</feature>
<feature type="helix" evidence="10">
    <location>
        <begin position="326"/>
        <end position="330"/>
    </location>
</feature>
<feature type="strand" evidence="10">
    <location>
        <begin position="334"/>
        <end position="337"/>
    </location>
</feature>
<feature type="strand" evidence="10">
    <location>
        <begin position="339"/>
        <end position="342"/>
    </location>
</feature>
<feature type="strand" evidence="10">
    <location>
        <begin position="345"/>
        <end position="347"/>
    </location>
</feature>
<feature type="strand" evidence="10">
    <location>
        <begin position="374"/>
        <end position="376"/>
    </location>
</feature>
<feature type="strand" evidence="10">
    <location>
        <begin position="379"/>
        <end position="382"/>
    </location>
</feature>
<feature type="strand" evidence="10">
    <location>
        <begin position="385"/>
        <end position="394"/>
    </location>
</feature>
<feature type="strand" evidence="10">
    <location>
        <begin position="397"/>
        <end position="408"/>
    </location>
</feature>
<feature type="strand" evidence="10">
    <location>
        <begin position="410"/>
        <end position="414"/>
    </location>
</feature>
<dbReference type="EMBL" id="X57413">
    <property type="protein sequence ID" value="CAA40672.1"/>
    <property type="molecule type" value="mRNA"/>
</dbReference>
<dbReference type="EMBL" id="BC011170">
    <property type="protein sequence ID" value="AAH11170.1"/>
    <property type="molecule type" value="mRNA"/>
</dbReference>
<dbReference type="CCDS" id="CCDS15601.1"/>
<dbReference type="PIR" id="A40148">
    <property type="entry name" value="WFMSB2"/>
</dbReference>
<dbReference type="RefSeq" id="NP_033393.2">
    <property type="nucleotide sequence ID" value="NM_009367.4"/>
</dbReference>
<dbReference type="PDB" id="5TX2">
    <property type="method" value="X-ray"/>
    <property type="resolution" value="1.82 A"/>
    <property type="chains" value="A/B=303-414"/>
</dbReference>
<dbReference type="PDB" id="5TX6">
    <property type="method" value="X-ray"/>
    <property type="resolution" value="2.75 A"/>
    <property type="chains" value="A/B/C=303-414"/>
</dbReference>
<dbReference type="PDBsum" id="5TX2"/>
<dbReference type="PDBsum" id="5TX6"/>
<dbReference type="SMR" id="P27090"/>
<dbReference type="BioGRID" id="204160">
    <property type="interactions" value="2"/>
</dbReference>
<dbReference type="ComplexPortal" id="CPX-827">
    <property type="entry name" value="TGF-beta-2 complex"/>
</dbReference>
<dbReference type="ComplexPortal" id="CPX-836">
    <property type="entry name" value="TGF-beta-2-TGFR complex"/>
</dbReference>
<dbReference type="FunCoup" id="P27090">
    <property type="interactions" value="1395"/>
</dbReference>
<dbReference type="STRING" id="10090.ENSMUSP00000142149"/>
<dbReference type="GlyConnect" id="2777">
    <property type="glycosylation" value="1 N-Linked glycan (1 site)"/>
</dbReference>
<dbReference type="GlyCosmos" id="P27090">
    <property type="glycosylation" value="3 sites, 1 glycan"/>
</dbReference>
<dbReference type="GlyGen" id="P27090">
    <property type="glycosylation" value="3 sites, 2 N-linked glycans (2 sites)"/>
</dbReference>
<dbReference type="iPTMnet" id="P27090"/>
<dbReference type="PhosphoSitePlus" id="P27090"/>
<dbReference type="jPOST" id="P27090"/>
<dbReference type="PaxDb" id="10090-ENSMUSP00000043849"/>
<dbReference type="PeptideAtlas" id="P27090"/>
<dbReference type="ProteomicsDB" id="263040"/>
<dbReference type="Pumba" id="P27090"/>
<dbReference type="ABCD" id="P27090">
    <property type="antibodies" value="29 sequenced antibodies"/>
</dbReference>
<dbReference type="Antibodypedia" id="20732">
    <property type="antibodies" value="616 antibodies from 38 providers"/>
</dbReference>
<dbReference type="DNASU" id="21808"/>
<dbReference type="Ensembl" id="ENSMUST00000045288.14">
    <property type="protein sequence ID" value="ENSMUSP00000043849.9"/>
    <property type="gene ID" value="ENSMUSG00000039239.15"/>
</dbReference>
<dbReference type="GeneID" id="21808"/>
<dbReference type="KEGG" id="mmu:21808"/>
<dbReference type="UCSC" id="uc007dzo.2">
    <property type="organism name" value="mouse"/>
</dbReference>
<dbReference type="AGR" id="MGI:98726"/>
<dbReference type="CTD" id="7042"/>
<dbReference type="MGI" id="MGI:98726">
    <property type="gene designation" value="Tgfb2"/>
</dbReference>
<dbReference type="VEuPathDB" id="HostDB:ENSMUSG00000039239"/>
<dbReference type="eggNOG" id="KOG3900">
    <property type="taxonomic scope" value="Eukaryota"/>
</dbReference>
<dbReference type="GeneTree" id="ENSGT00940000157390"/>
<dbReference type="HOGENOM" id="CLU_039840_0_0_1"/>
<dbReference type="InParanoid" id="P27090"/>
<dbReference type="OMA" id="NCCLRPF"/>
<dbReference type="OrthoDB" id="6092228at2759"/>
<dbReference type="PhylomeDB" id="P27090"/>
<dbReference type="TreeFam" id="TF318514"/>
<dbReference type="Reactome" id="R-MMU-114608">
    <property type="pathway name" value="Platelet degranulation"/>
</dbReference>
<dbReference type="Reactome" id="R-MMU-2129379">
    <property type="pathway name" value="Molecules associated with elastic fibres"/>
</dbReference>
<dbReference type="Reactome" id="R-MMU-2173789">
    <property type="pathway name" value="TGF-beta receptor signaling activates SMADs"/>
</dbReference>
<dbReference type="Reactome" id="R-MMU-9839389">
    <property type="pathway name" value="TGFBR3 regulates TGF-beta signaling"/>
</dbReference>
<dbReference type="BioGRID-ORCS" id="21808">
    <property type="hits" value="0 hits in 82 CRISPR screens"/>
</dbReference>
<dbReference type="ChiTaRS" id="Tgfb2">
    <property type="organism name" value="mouse"/>
</dbReference>
<dbReference type="PRO" id="PR:P27090"/>
<dbReference type="Proteomes" id="UP000000589">
    <property type="component" value="Chromosome 1"/>
</dbReference>
<dbReference type="RNAct" id="P27090">
    <property type="molecule type" value="protein"/>
</dbReference>
<dbReference type="Bgee" id="ENSMUSG00000039239">
    <property type="expression patterns" value="Expressed in epithelium of cochlear duct and 340 other cell types or tissues"/>
</dbReference>
<dbReference type="ExpressionAtlas" id="P27090">
    <property type="expression patterns" value="baseline and differential"/>
</dbReference>
<dbReference type="GO" id="GO:0030424">
    <property type="term" value="C:axon"/>
    <property type="evidence" value="ECO:0000314"/>
    <property type="project" value="UniProtKB"/>
</dbReference>
<dbReference type="GO" id="GO:0005768">
    <property type="term" value="C:endosome"/>
    <property type="evidence" value="ECO:0000314"/>
    <property type="project" value="UniProtKB"/>
</dbReference>
<dbReference type="GO" id="GO:0031012">
    <property type="term" value="C:extracellular matrix"/>
    <property type="evidence" value="ECO:0000250"/>
    <property type="project" value="UniProtKB"/>
</dbReference>
<dbReference type="GO" id="GO:0005576">
    <property type="term" value="C:extracellular region"/>
    <property type="evidence" value="ECO:0000250"/>
    <property type="project" value="UniProtKB"/>
</dbReference>
<dbReference type="GO" id="GO:0005615">
    <property type="term" value="C:extracellular space"/>
    <property type="evidence" value="ECO:0000314"/>
    <property type="project" value="MGI"/>
</dbReference>
<dbReference type="GO" id="GO:0043025">
    <property type="term" value="C:neuronal cell body"/>
    <property type="evidence" value="ECO:0000314"/>
    <property type="project" value="UniProtKB"/>
</dbReference>
<dbReference type="GO" id="GO:0001540">
    <property type="term" value="F:amyloid-beta binding"/>
    <property type="evidence" value="ECO:0000250"/>
    <property type="project" value="UniProtKB"/>
</dbReference>
<dbReference type="GO" id="GO:0008083">
    <property type="term" value="F:growth factor activity"/>
    <property type="evidence" value="ECO:0000304"/>
    <property type="project" value="UniProtKB"/>
</dbReference>
<dbReference type="GO" id="GO:0042803">
    <property type="term" value="F:protein homodimerization activity"/>
    <property type="evidence" value="ECO:0000250"/>
    <property type="project" value="UniProtKB"/>
</dbReference>
<dbReference type="GO" id="GO:0005102">
    <property type="term" value="F:signaling receptor binding"/>
    <property type="evidence" value="ECO:0000250"/>
    <property type="project" value="UniProtKB"/>
</dbReference>
<dbReference type="GO" id="GO:0005160">
    <property type="term" value="F:transforming growth factor beta receptor binding"/>
    <property type="evidence" value="ECO:0000250"/>
    <property type="project" value="UniProtKB"/>
</dbReference>
<dbReference type="GO" id="GO:0005114">
    <property type="term" value="F:type II transforming growth factor beta receptor binding"/>
    <property type="evidence" value="ECO:0000250"/>
    <property type="project" value="UniProtKB"/>
</dbReference>
<dbReference type="GO" id="GO:0034714">
    <property type="term" value="F:type III transforming growth factor beta receptor binding"/>
    <property type="evidence" value="ECO:0000250"/>
    <property type="project" value="AgBase"/>
</dbReference>
<dbReference type="GO" id="GO:0006924">
    <property type="term" value="P:activation-induced cell death of T cells"/>
    <property type="evidence" value="ECO:0000314"/>
    <property type="project" value="MGI"/>
</dbReference>
<dbReference type="GO" id="GO:0035910">
    <property type="term" value="P:ascending aorta morphogenesis"/>
    <property type="evidence" value="ECO:0000315"/>
    <property type="project" value="BHF-UCL"/>
</dbReference>
<dbReference type="GO" id="GO:0060413">
    <property type="term" value="P:atrial septum morphogenesis"/>
    <property type="evidence" value="ECO:0000315"/>
    <property type="project" value="BHF-UCL"/>
</dbReference>
<dbReference type="GO" id="GO:0003289">
    <property type="term" value="P:atrial septum primum morphogenesis"/>
    <property type="evidence" value="ECO:0000315"/>
    <property type="project" value="BHF-UCL"/>
</dbReference>
<dbReference type="GO" id="GO:0003181">
    <property type="term" value="P:atrioventricular valve morphogenesis"/>
    <property type="evidence" value="ECO:0000315"/>
    <property type="project" value="BHF-UCL"/>
</dbReference>
<dbReference type="GO" id="GO:0007411">
    <property type="term" value="P:axon guidance"/>
    <property type="evidence" value="ECO:0000315"/>
    <property type="project" value="MGI"/>
</dbReference>
<dbReference type="GO" id="GO:0001568">
    <property type="term" value="P:blood vessel development"/>
    <property type="evidence" value="ECO:0000315"/>
    <property type="project" value="MGI"/>
</dbReference>
<dbReference type="GO" id="GO:0001974">
    <property type="term" value="P:blood vessel remodeling"/>
    <property type="evidence" value="ECO:0000315"/>
    <property type="project" value="MGI"/>
</dbReference>
<dbReference type="GO" id="GO:0060317">
    <property type="term" value="P:cardiac epithelial to mesenchymal transition"/>
    <property type="evidence" value="ECO:0000250"/>
    <property type="project" value="UniProtKB"/>
</dbReference>
<dbReference type="GO" id="GO:0003214">
    <property type="term" value="P:cardiac left ventricle morphogenesis"/>
    <property type="evidence" value="ECO:0000304"/>
    <property type="project" value="DFLAT"/>
</dbReference>
<dbReference type="GO" id="GO:0060038">
    <property type="term" value="P:cardiac muscle cell proliferation"/>
    <property type="evidence" value="ECO:0000250"/>
    <property type="project" value="UniProtKB"/>
</dbReference>
<dbReference type="GO" id="GO:0003215">
    <property type="term" value="P:cardiac right ventricle morphogenesis"/>
    <property type="evidence" value="ECO:0000315"/>
    <property type="project" value="BHF-UCL"/>
</dbReference>
<dbReference type="GO" id="GO:0010002">
    <property type="term" value="P:cardioblast differentiation"/>
    <property type="evidence" value="ECO:0000250"/>
    <property type="project" value="UniProtKB"/>
</dbReference>
<dbReference type="GO" id="GO:0001502">
    <property type="term" value="P:cartilage condensation"/>
    <property type="evidence" value="ECO:0000316"/>
    <property type="project" value="MGI"/>
</dbReference>
<dbReference type="GO" id="GO:0016477">
    <property type="term" value="P:cell migration"/>
    <property type="evidence" value="ECO:0000250"/>
    <property type="project" value="UniProtKB"/>
</dbReference>
<dbReference type="GO" id="GO:0000902">
    <property type="term" value="P:cell morphogenesis"/>
    <property type="evidence" value="ECO:0000250"/>
    <property type="project" value="UniProtKB"/>
</dbReference>
<dbReference type="GO" id="GO:0045216">
    <property type="term" value="P:cell-cell junction organization"/>
    <property type="evidence" value="ECO:0000250"/>
    <property type="project" value="UniProtKB"/>
</dbReference>
<dbReference type="GO" id="GO:0030199">
    <property type="term" value="P:collagen fibril organization"/>
    <property type="evidence" value="ECO:0000250"/>
    <property type="project" value="UniProtKB"/>
</dbReference>
<dbReference type="GO" id="GO:1904888">
    <property type="term" value="P:cranial skeletal system development"/>
    <property type="evidence" value="ECO:0000315"/>
    <property type="project" value="BHF-UCL"/>
</dbReference>
<dbReference type="GO" id="GO:0042416">
    <property type="term" value="P:dopamine biosynthetic process"/>
    <property type="evidence" value="ECO:0000315"/>
    <property type="project" value="UniProtKB"/>
</dbReference>
<dbReference type="GO" id="GO:0048566">
    <property type="term" value="P:embryonic digestive tract development"/>
    <property type="evidence" value="ECO:0000250"/>
    <property type="project" value="AgBase"/>
</dbReference>
<dbReference type="GO" id="GO:0030326">
    <property type="term" value="P:embryonic limb morphogenesis"/>
    <property type="evidence" value="ECO:0000315"/>
    <property type="project" value="BHF-UCL"/>
</dbReference>
<dbReference type="GO" id="GO:0003274">
    <property type="term" value="P:endocardial cushion fusion"/>
    <property type="evidence" value="ECO:0000315"/>
    <property type="project" value="BHF-UCL"/>
</dbReference>
<dbReference type="GO" id="GO:0003203">
    <property type="term" value="P:endocardial cushion morphogenesis"/>
    <property type="evidence" value="ECO:0000315"/>
    <property type="project" value="BHF-UCL"/>
</dbReference>
<dbReference type="GO" id="GO:0030855">
    <property type="term" value="P:epithelial cell differentiation"/>
    <property type="evidence" value="ECO:0000250"/>
    <property type="project" value="UniProtKB"/>
</dbReference>
<dbReference type="GO" id="GO:0001837">
    <property type="term" value="P:epithelial to mesenchymal transition"/>
    <property type="evidence" value="ECO:0000250"/>
    <property type="project" value="UniProtKB"/>
</dbReference>
<dbReference type="GO" id="GO:0030198">
    <property type="term" value="P:extracellular matrix organization"/>
    <property type="evidence" value="ECO:0000315"/>
    <property type="project" value="MGI"/>
</dbReference>
<dbReference type="GO" id="GO:0097191">
    <property type="term" value="P:extrinsic apoptotic signaling pathway"/>
    <property type="evidence" value="ECO:0000250"/>
    <property type="project" value="UniProtKB"/>
</dbReference>
<dbReference type="GO" id="GO:0097192">
    <property type="term" value="P:extrinsic apoptotic signaling pathway in absence of ligand"/>
    <property type="evidence" value="ECO:0000314"/>
    <property type="project" value="MGI"/>
</dbReference>
<dbReference type="GO" id="GO:0001654">
    <property type="term" value="P:eye development"/>
    <property type="evidence" value="ECO:0000250"/>
    <property type="project" value="UniProtKB"/>
</dbReference>
<dbReference type="GO" id="GO:0060325">
    <property type="term" value="P:face morphogenesis"/>
    <property type="evidence" value="ECO:0000270"/>
    <property type="project" value="UniProtKB"/>
</dbReference>
<dbReference type="GO" id="GO:0008347">
    <property type="term" value="P:glial cell migration"/>
    <property type="evidence" value="ECO:0000250"/>
    <property type="project" value="UniProtKB"/>
</dbReference>
<dbReference type="GO" id="GO:0001942">
    <property type="term" value="P:hair follicle development"/>
    <property type="evidence" value="ECO:0000315"/>
    <property type="project" value="UniProtKB"/>
</dbReference>
<dbReference type="GO" id="GO:0031069">
    <property type="term" value="P:hair follicle morphogenesis"/>
    <property type="evidence" value="ECO:0000315"/>
    <property type="project" value="UniProtKB"/>
</dbReference>
<dbReference type="GO" id="GO:0007507">
    <property type="term" value="P:heart development"/>
    <property type="evidence" value="ECO:0000315"/>
    <property type="project" value="MGI"/>
</dbReference>
<dbReference type="GO" id="GO:0003007">
    <property type="term" value="P:heart morphogenesis"/>
    <property type="evidence" value="ECO:0000250"/>
    <property type="project" value="UniProtKB"/>
</dbReference>
<dbReference type="GO" id="GO:0003179">
    <property type="term" value="P:heart valve morphogenesis"/>
    <property type="evidence" value="ECO:0000315"/>
    <property type="project" value="BHF-UCL"/>
</dbReference>
<dbReference type="GO" id="GO:0030097">
    <property type="term" value="P:hemopoiesis"/>
    <property type="evidence" value="ECO:0000315"/>
    <property type="project" value="UniProtKB"/>
</dbReference>
<dbReference type="GO" id="GO:0048839">
    <property type="term" value="P:inner ear development"/>
    <property type="evidence" value="ECO:0000315"/>
    <property type="project" value="BHF-UCL"/>
</dbReference>
<dbReference type="GO" id="GO:0001822">
    <property type="term" value="P:kidney development"/>
    <property type="evidence" value="ECO:0000315"/>
    <property type="project" value="BHF-UCL"/>
</dbReference>
<dbReference type="GO" id="GO:0008584">
    <property type="term" value="P:male gonad development"/>
    <property type="evidence" value="ECO:0000315"/>
    <property type="project" value="BHF-UCL"/>
</dbReference>
<dbReference type="GO" id="GO:0003149">
    <property type="term" value="P:membranous septum morphogenesis"/>
    <property type="evidence" value="ECO:0000315"/>
    <property type="project" value="BHF-UCL"/>
</dbReference>
<dbReference type="GO" id="GO:0016525">
    <property type="term" value="P:negative regulation of angiogenesis"/>
    <property type="evidence" value="ECO:0007669"/>
    <property type="project" value="Ensembl"/>
</dbReference>
<dbReference type="GO" id="GO:0061037">
    <property type="term" value="P:negative regulation of cartilage development"/>
    <property type="evidence" value="ECO:0000315"/>
    <property type="project" value="MGI"/>
</dbReference>
<dbReference type="GO" id="GO:0030308">
    <property type="term" value="P:negative regulation of cell growth"/>
    <property type="evidence" value="ECO:0000250"/>
    <property type="project" value="AgBase"/>
</dbReference>
<dbReference type="GO" id="GO:0008285">
    <property type="term" value="P:negative regulation of cell population proliferation"/>
    <property type="evidence" value="ECO:0000250"/>
    <property type="project" value="UniProtKB"/>
</dbReference>
<dbReference type="GO" id="GO:0050680">
    <property type="term" value="P:negative regulation of epithelial cell proliferation"/>
    <property type="evidence" value="ECO:0000250"/>
    <property type="project" value="UniProtKB"/>
</dbReference>
<dbReference type="GO" id="GO:1905006">
    <property type="term" value="P:negative regulation of epithelial to mesenchymal transition involved in endocardial cushion formation"/>
    <property type="evidence" value="ECO:0000315"/>
    <property type="project" value="BHF-UCL"/>
</dbReference>
<dbReference type="GO" id="GO:0010629">
    <property type="term" value="P:negative regulation of gene expression"/>
    <property type="evidence" value="ECO:0000314"/>
    <property type="project" value="UniProtKB"/>
</dbReference>
<dbReference type="GO" id="GO:0045617">
    <property type="term" value="P:negative regulation of keratinocyte differentiation"/>
    <property type="evidence" value="ECO:0000303"/>
    <property type="project" value="UniProtKB"/>
</dbReference>
<dbReference type="GO" id="GO:0010936">
    <property type="term" value="P:negative regulation of macrophage cytokine production"/>
    <property type="evidence" value="ECO:0000250"/>
    <property type="project" value="UniProtKB"/>
</dbReference>
<dbReference type="GO" id="GO:0046580">
    <property type="term" value="P:negative regulation of Ras protein signal transduction"/>
    <property type="evidence" value="ECO:0000315"/>
    <property type="project" value="BHF-UCL"/>
</dbReference>
<dbReference type="GO" id="GO:0003407">
    <property type="term" value="P:neural retina development"/>
    <property type="evidence" value="ECO:0000315"/>
    <property type="project" value="BHF-UCL"/>
</dbReference>
<dbReference type="GO" id="GO:0001843">
    <property type="term" value="P:neural tube closure"/>
    <property type="evidence" value="ECO:0000315"/>
    <property type="project" value="BHF-UCL"/>
</dbReference>
<dbReference type="GO" id="GO:0048666">
    <property type="term" value="P:neuron development"/>
    <property type="evidence" value="ECO:0000315"/>
    <property type="project" value="UniProtKB"/>
</dbReference>
<dbReference type="GO" id="GO:0048663">
    <property type="term" value="P:neuron fate commitment"/>
    <property type="evidence" value="ECO:0000314"/>
    <property type="project" value="MGI"/>
</dbReference>
<dbReference type="GO" id="GO:0030593">
    <property type="term" value="P:neutrophil chemotaxis"/>
    <property type="evidence" value="ECO:0000250"/>
    <property type="project" value="UniProtKB"/>
</dbReference>
<dbReference type="GO" id="GO:0003151">
    <property type="term" value="P:outflow tract morphogenesis"/>
    <property type="evidence" value="ECO:0000315"/>
    <property type="project" value="UniProtKB"/>
</dbReference>
<dbReference type="GO" id="GO:0003148">
    <property type="term" value="P:outflow tract septum morphogenesis"/>
    <property type="evidence" value="ECO:0000315"/>
    <property type="project" value="BHF-UCL"/>
</dbReference>
<dbReference type="GO" id="GO:1904238">
    <property type="term" value="P:pericyte cell differentiation"/>
    <property type="evidence" value="ECO:0000315"/>
    <property type="project" value="ARUK-UCL"/>
</dbReference>
<dbReference type="GO" id="GO:0061626">
    <property type="term" value="P:pharyngeal arch artery morphogenesis"/>
    <property type="evidence" value="ECO:0000315"/>
    <property type="project" value="BHF-UCL"/>
</dbReference>
<dbReference type="GO" id="GO:0070237">
    <property type="term" value="P:positive regulation of activation-induced cell death of T cells"/>
    <property type="evidence" value="ECO:0000314"/>
    <property type="project" value="MGI"/>
</dbReference>
<dbReference type="GO" id="GO:0062043">
    <property type="term" value="P:positive regulation of cardiac epithelial to mesenchymal transition"/>
    <property type="evidence" value="ECO:0000315"/>
    <property type="project" value="UniProtKB"/>
</dbReference>
<dbReference type="GO" id="GO:0051891">
    <property type="term" value="P:positive regulation of cardioblast differentiation"/>
    <property type="evidence" value="ECO:0000250"/>
    <property type="project" value="UniProtKB"/>
</dbReference>
<dbReference type="GO" id="GO:0033630">
    <property type="term" value="P:positive regulation of cell adhesion mediated by integrin"/>
    <property type="evidence" value="ECO:0000250"/>
    <property type="project" value="UniProtKB"/>
</dbReference>
<dbReference type="GO" id="GO:0045787">
    <property type="term" value="P:positive regulation of cell cycle"/>
    <property type="evidence" value="ECO:0000315"/>
    <property type="project" value="UniProtKB"/>
</dbReference>
<dbReference type="GO" id="GO:0051781">
    <property type="term" value="P:positive regulation of cell division"/>
    <property type="evidence" value="ECO:0007669"/>
    <property type="project" value="UniProtKB-KW"/>
</dbReference>
<dbReference type="GO" id="GO:0030307">
    <property type="term" value="P:positive regulation of cell growth"/>
    <property type="evidence" value="ECO:0000250"/>
    <property type="project" value="UniProtKB"/>
</dbReference>
<dbReference type="GO" id="GO:0008284">
    <property type="term" value="P:positive regulation of cell population proliferation"/>
    <property type="evidence" value="ECO:0000250"/>
    <property type="project" value="UniProtKB"/>
</dbReference>
<dbReference type="GO" id="GO:0010634">
    <property type="term" value="P:positive regulation of epithelial cell migration"/>
    <property type="evidence" value="ECO:0000250"/>
    <property type="project" value="UniProtKB"/>
</dbReference>
<dbReference type="GO" id="GO:0010718">
    <property type="term" value="P:positive regulation of epithelial to mesenchymal transition"/>
    <property type="evidence" value="ECO:0000250"/>
    <property type="project" value="UniProtKB"/>
</dbReference>
<dbReference type="GO" id="GO:1905007">
    <property type="term" value="P:positive regulation of epithelial to mesenchymal transition involved in endocardial cushion formation"/>
    <property type="evidence" value="ECO:0000315"/>
    <property type="project" value="BHF-UCL"/>
</dbReference>
<dbReference type="GO" id="GO:0090091">
    <property type="term" value="P:positive regulation of extracellular matrix disassembly"/>
    <property type="evidence" value="ECO:0000314"/>
    <property type="project" value="UniProtKB"/>
</dbReference>
<dbReference type="GO" id="GO:2001241">
    <property type="term" value="P:positive regulation of extrinsic apoptotic signaling pathway in absence of ligand"/>
    <property type="evidence" value="ECO:0000314"/>
    <property type="project" value="MGI"/>
</dbReference>
<dbReference type="GO" id="GO:0010628">
    <property type="term" value="P:positive regulation of gene expression"/>
    <property type="evidence" value="ECO:0000314"/>
    <property type="project" value="UniProtKB"/>
</dbReference>
<dbReference type="GO" id="GO:1904426">
    <property type="term" value="P:positive regulation of GTP binding"/>
    <property type="evidence" value="ECO:0000314"/>
    <property type="project" value="UniProtKB"/>
</dbReference>
<dbReference type="GO" id="GO:0045823">
    <property type="term" value="P:positive regulation of heart contraction"/>
    <property type="evidence" value="ECO:0000250"/>
    <property type="project" value="UniProtKB"/>
</dbReference>
<dbReference type="GO" id="GO:0050778">
    <property type="term" value="P:positive regulation of immune response"/>
    <property type="evidence" value="ECO:0000250"/>
    <property type="project" value="UniProtKB"/>
</dbReference>
<dbReference type="GO" id="GO:0045726">
    <property type="term" value="P:positive regulation of integrin biosynthetic process"/>
    <property type="evidence" value="ECO:0000250"/>
    <property type="project" value="UniProtKB"/>
</dbReference>
<dbReference type="GO" id="GO:1902895">
    <property type="term" value="P:positive regulation of miRNA transcription"/>
    <property type="evidence" value="ECO:0007669"/>
    <property type="project" value="Ensembl"/>
</dbReference>
<dbReference type="GO" id="GO:0043525">
    <property type="term" value="P:positive regulation of neuron apoptotic process"/>
    <property type="evidence" value="ECO:0000250"/>
    <property type="project" value="UniProtKB"/>
</dbReference>
<dbReference type="GO" id="GO:0045747">
    <property type="term" value="P:positive regulation of Notch signaling pathway"/>
    <property type="evidence" value="ECO:0007669"/>
    <property type="project" value="Ensembl"/>
</dbReference>
<dbReference type="GO" id="GO:0051897">
    <property type="term" value="P:positive regulation of phosphatidylinositol 3-kinase/protein kinase B signal transduction"/>
    <property type="evidence" value="ECO:0000250"/>
    <property type="project" value="UniProtKB"/>
</dbReference>
<dbReference type="GO" id="GO:1900182">
    <property type="term" value="P:positive regulation of protein localization to nucleus"/>
    <property type="evidence" value="ECO:0000314"/>
    <property type="project" value="UniProtKB"/>
</dbReference>
<dbReference type="GO" id="GO:0050714">
    <property type="term" value="P:positive regulation of protein secretion"/>
    <property type="evidence" value="ECO:0000250"/>
    <property type="project" value="UniProtKB"/>
</dbReference>
<dbReference type="GO" id="GO:0060391">
    <property type="term" value="P:positive regulation of SMAD protein signal transduction"/>
    <property type="evidence" value="ECO:0000314"/>
    <property type="project" value="BHF-UCL"/>
</dbReference>
<dbReference type="GO" id="GO:0032874">
    <property type="term" value="P:positive regulation of stress-activated MAPK cascade"/>
    <property type="evidence" value="ECO:0000250"/>
    <property type="project" value="UniProtKB"/>
</dbReference>
<dbReference type="GO" id="GO:0051795">
    <property type="term" value="P:positive regulation of timing of catagen"/>
    <property type="evidence" value="ECO:0000250"/>
    <property type="project" value="UniProtKB"/>
</dbReference>
<dbReference type="GO" id="GO:0003184">
    <property type="term" value="P:pulmonary valve morphogenesis"/>
    <property type="evidence" value="ECO:0000315"/>
    <property type="project" value="BHF-UCL"/>
</dbReference>
<dbReference type="GO" id="GO:0032956">
    <property type="term" value="P:regulation of actin cytoskeleton organization"/>
    <property type="evidence" value="ECO:0000314"/>
    <property type="project" value="UniProtKB"/>
</dbReference>
<dbReference type="GO" id="GO:0042981">
    <property type="term" value="P:regulation of apoptotic process"/>
    <property type="evidence" value="ECO:0000315"/>
    <property type="project" value="MGI"/>
</dbReference>
<dbReference type="GO" id="GO:1902256">
    <property type="term" value="P:regulation of apoptotic process involved in outflow tract morphogenesis"/>
    <property type="evidence" value="ECO:0000315"/>
    <property type="project" value="BHF-UCL"/>
</dbReference>
<dbReference type="GO" id="GO:0042127">
    <property type="term" value="P:regulation of cell population proliferation"/>
    <property type="evidence" value="ECO:0000250"/>
    <property type="project" value="UniProtKB"/>
</dbReference>
<dbReference type="GO" id="GO:1903053">
    <property type="term" value="P:regulation of extracellular matrix organization"/>
    <property type="evidence" value="ECO:0000315"/>
    <property type="project" value="MGI"/>
</dbReference>
<dbReference type="GO" id="GO:0051794">
    <property type="term" value="P:regulation of timing of catagen"/>
    <property type="evidence" value="ECO:0000250"/>
    <property type="project" value="UniProtKB"/>
</dbReference>
<dbReference type="GO" id="GO:0032909">
    <property type="term" value="P:regulation of transforming growth factor beta2 production"/>
    <property type="evidence" value="ECO:0000250"/>
    <property type="project" value="UniProtKB"/>
</dbReference>
<dbReference type="GO" id="GO:0001666">
    <property type="term" value="P:response to hypoxia"/>
    <property type="evidence" value="ECO:0000250"/>
    <property type="project" value="UniProtKB"/>
</dbReference>
<dbReference type="GO" id="GO:0032570">
    <property type="term" value="P:response to progesterone"/>
    <property type="evidence" value="ECO:0000250"/>
    <property type="project" value="UniProtKB"/>
</dbReference>
<dbReference type="GO" id="GO:0009611">
    <property type="term" value="P:response to wounding"/>
    <property type="evidence" value="ECO:0000250"/>
    <property type="project" value="AgBase"/>
</dbReference>
<dbReference type="GO" id="GO:0007435">
    <property type="term" value="P:salivary gland morphogenesis"/>
    <property type="evidence" value="ECO:0000250"/>
    <property type="project" value="AgBase"/>
</dbReference>
<dbReference type="GO" id="GO:0062009">
    <property type="term" value="P:secondary palate development"/>
    <property type="evidence" value="ECO:0000315"/>
    <property type="project" value="BHF-UCL"/>
</dbReference>
<dbReference type="GO" id="GO:0023052">
    <property type="term" value="P:signaling"/>
    <property type="evidence" value="ECO:0000250"/>
    <property type="project" value="UniProtKB"/>
</dbReference>
<dbReference type="GO" id="GO:0001501">
    <property type="term" value="P:skeletal system development"/>
    <property type="evidence" value="ECO:0000315"/>
    <property type="project" value="BHF-UCL"/>
</dbReference>
<dbReference type="GO" id="GO:0048103">
    <property type="term" value="P:somatic stem cell division"/>
    <property type="evidence" value="ECO:0000314"/>
    <property type="project" value="UniProtKB"/>
</dbReference>
<dbReference type="GO" id="GO:1903701">
    <property type="term" value="P:substantia propria of cornea development"/>
    <property type="evidence" value="ECO:0000315"/>
    <property type="project" value="BHF-UCL"/>
</dbReference>
<dbReference type="GO" id="GO:0007179">
    <property type="term" value="P:transforming growth factor beta receptor signaling pathway"/>
    <property type="evidence" value="ECO:0000314"/>
    <property type="project" value="BHF-UCL"/>
</dbReference>
<dbReference type="GO" id="GO:0060065">
    <property type="term" value="P:uterus development"/>
    <property type="evidence" value="ECO:0000315"/>
    <property type="project" value="BHF-UCL"/>
</dbReference>
<dbReference type="GO" id="GO:0060412">
    <property type="term" value="P:ventricular septum morphogenesis"/>
    <property type="evidence" value="ECO:0000315"/>
    <property type="project" value="BHF-UCL"/>
</dbReference>
<dbReference type="GO" id="GO:0003222">
    <property type="term" value="P:ventricular trabecula myocardium morphogenesis"/>
    <property type="evidence" value="ECO:0000315"/>
    <property type="project" value="BHF-UCL"/>
</dbReference>
<dbReference type="GO" id="GO:0042060">
    <property type="term" value="P:wound healing"/>
    <property type="evidence" value="ECO:0000250"/>
    <property type="project" value="UniProtKB"/>
</dbReference>
<dbReference type="CDD" id="cd19385">
    <property type="entry name" value="TGF_beta_TGFB2"/>
    <property type="match status" value="1"/>
</dbReference>
<dbReference type="FunFam" id="2.10.90.10:FF:000004">
    <property type="entry name" value="Transforming growth factor beta"/>
    <property type="match status" value="1"/>
</dbReference>
<dbReference type="FunFam" id="2.60.120.970:FF:000002">
    <property type="entry name" value="Transforming growth factor beta"/>
    <property type="match status" value="1"/>
</dbReference>
<dbReference type="Gene3D" id="2.60.120.970">
    <property type="match status" value="1"/>
</dbReference>
<dbReference type="Gene3D" id="2.10.90.10">
    <property type="entry name" value="Cystine-knot cytokines"/>
    <property type="match status" value="1"/>
</dbReference>
<dbReference type="InterPro" id="IPR029034">
    <property type="entry name" value="Cystine-knot_cytokine"/>
</dbReference>
<dbReference type="InterPro" id="IPR001839">
    <property type="entry name" value="TGF-b_C"/>
</dbReference>
<dbReference type="InterPro" id="IPR001111">
    <property type="entry name" value="TGF-b_propeptide"/>
</dbReference>
<dbReference type="InterPro" id="IPR016319">
    <property type="entry name" value="TGF-beta"/>
</dbReference>
<dbReference type="InterPro" id="IPR015615">
    <property type="entry name" value="TGF-beta-rel"/>
</dbReference>
<dbReference type="InterPro" id="IPR003940">
    <property type="entry name" value="TGFb2"/>
</dbReference>
<dbReference type="InterPro" id="IPR017948">
    <property type="entry name" value="TGFb_CS"/>
</dbReference>
<dbReference type="NCBIfam" id="NF033679">
    <property type="entry name" value="DNRLRE_dom"/>
    <property type="match status" value="1"/>
</dbReference>
<dbReference type="PANTHER" id="PTHR11848">
    <property type="entry name" value="TGF-BETA FAMILY"/>
    <property type="match status" value="1"/>
</dbReference>
<dbReference type="PANTHER" id="PTHR11848:SF141">
    <property type="entry name" value="TRANSFORMING GROWTH FACTOR BETA-2 PROPROTEIN"/>
    <property type="match status" value="1"/>
</dbReference>
<dbReference type="Pfam" id="PF00019">
    <property type="entry name" value="TGF_beta"/>
    <property type="match status" value="1"/>
</dbReference>
<dbReference type="Pfam" id="PF00688">
    <property type="entry name" value="TGFb_propeptide"/>
    <property type="match status" value="1"/>
</dbReference>
<dbReference type="PIRSF" id="PIRSF001787">
    <property type="entry name" value="TGF-beta"/>
    <property type="match status" value="1"/>
</dbReference>
<dbReference type="PRINTS" id="PR01423">
    <property type="entry name" value="TGFBETA"/>
</dbReference>
<dbReference type="PRINTS" id="PR01425">
    <property type="entry name" value="TGFBETA2"/>
</dbReference>
<dbReference type="SMART" id="SM00204">
    <property type="entry name" value="TGFB"/>
    <property type="match status" value="1"/>
</dbReference>
<dbReference type="SUPFAM" id="SSF57501">
    <property type="entry name" value="Cystine-knot cytokines"/>
    <property type="match status" value="1"/>
</dbReference>
<dbReference type="PROSITE" id="PS00250">
    <property type="entry name" value="TGF_BETA_1"/>
    <property type="match status" value="1"/>
</dbReference>
<dbReference type="PROSITE" id="PS51362">
    <property type="entry name" value="TGF_BETA_2"/>
    <property type="match status" value="1"/>
</dbReference>
<keyword id="KW-0002">3D-structure</keyword>
<keyword id="KW-0165">Cleavage on pair of basic residues</keyword>
<keyword id="KW-1015">Disulfide bond</keyword>
<keyword id="KW-0272">Extracellular matrix</keyword>
<keyword id="KW-0325">Glycoprotein</keyword>
<keyword id="KW-0339">Growth factor</keyword>
<keyword id="KW-0497">Mitogen</keyword>
<keyword id="KW-1185">Reference proteome</keyword>
<keyword id="KW-0964">Secreted</keyword>
<keyword id="KW-0732">Signal</keyword>
<comment type="function">
    <molecule>Transforming growth factor beta-2 proprotein</molecule>
    <text evidence="1 2">Precursor of the Latency-associated peptide (LAP) and Transforming growth factor beta-2 (TGF-beta-2) chains, which constitute the regulatory and active subunit of TGF-beta-2, respectively.</text>
</comment>
<comment type="function">
    <molecule>Latency-associated peptide</molecule>
    <text evidence="1 2">Required to maintain the Transforming growth factor beta-2 (TGF-beta-2) chain in a latent state during storage in extracellular matrix. Associates non-covalently with TGF-beta-2 and regulates its activation via interaction with 'milieu molecules', such as LTBP1 and LRRC32/GARP, that control activation of TGF-beta-2.</text>
</comment>
<comment type="function">
    <molecule>Transforming growth factor beta-2</molecule>
    <text evidence="1 2 3">Multifunctional protein that regulates various processes such as angiogenesis and heart development (By similarity). Activation into mature form follows different steps: following cleavage of the proprotein in the Golgi apparatus, Latency-associated peptide (LAP) and Transforming growth factor beta-2 (TGF-beta-2) chains remain non-covalently linked rendering TGF-beta-2 inactive during storage in extracellular matrix (By similarity). At the same time, LAP chain interacts with 'milieu molecules', such as LTBP1 and LRRC32/GARP, that control activation of TGF-beta-2 and maintain it in a latent state during storage in extracellular milieus (By similarity). Once activated following release of LAP, TGF-beta-2 acts by binding to TGF-beta receptors (TGFBR1 and TGFBR2), which transduce signal (By similarity).</text>
</comment>
<comment type="subunit">
    <text evidence="3 5 7 8">Interacts with the serine proteases, HTRA1 and HTRA3 (PubMed:14973287, PubMed:15206957). Interacts with ASPN (By similarity). Interacts with MFAP5 (PubMed:23963447).</text>
</comment>
<comment type="subunit">
    <molecule>Latency-associated peptide</molecule>
    <text evidence="1 3 6">Interacts with Transforming growth factor beta-2 (TGF-beta-2) chain; interaction is non-covalent and maintains (TGF-beta-2) in a latent state (By similarity). Interacts with LRRC32/GARP; leading to regulate activation of TGF-beta-2 (By similarity). Interacts with NREP; the interaction results in a decrease in TGFB2 autoinduction (PubMed:14985127).</text>
</comment>
<comment type="subunit">
    <molecule>Transforming growth factor beta-2</molecule>
    <text evidence="1 3">Transforming growth factor beta-2: Homodimer; disulfide-linked (By similarity). Transforming growth factor beta-2: Interacts with TGF-beta receptors (TGFBR1 and TGFBR2), leading to signal transduction (By similarity).</text>
</comment>
<comment type="subcellular location">
    <molecule>Latency-associated peptide</molecule>
    <subcellularLocation>
        <location evidence="1">Secreted</location>
        <location evidence="1">Extracellular space</location>
        <location evidence="1">Extracellular matrix</location>
    </subcellularLocation>
</comment>
<comment type="subcellular location">
    <molecule>Transforming growth factor beta-2</molecule>
    <subcellularLocation>
        <location evidence="1">Secreted</location>
    </subcellularLocation>
</comment>
<comment type="PTM">
    <molecule>Transforming growth factor beta-2</molecule>
    <text evidence="1">The precursor proprotein is cleaved in the Golgi apparatus to form Transforming growth factor beta-2 (TGF-beta-2) and Latency-associated peptide (LAP) chains, which remain non-covalently linked, rendering TGF-beta-2 inactive.</text>
</comment>
<comment type="similarity">
    <text evidence="9">Belongs to the TGF-beta family.</text>
</comment>
<gene>
    <name type="primary">Tgfb2</name>
</gene>
<name>TGFB2_MOUSE</name>